<evidence type="ECO:0000250" key="1">
    <source>
        <dbReference type="UniProtKB" id="P19651"/>
    </source>
</evidence>
<evidence type="ECO:0000255" key="2"/>
<evidence type="ECO:0000269" key="3">
    <source>
    </source>
</evidence>
<evidence type="ECO:0000303" key="4">
    <source>
    </source>
</evidence>
<evidence type="ECO:0000305" key="5"/>
<evidence type="ECO:0000305" key="6">
    <source>
    </source>
</evidence>
<accession>P0DY38</accession>
<feature type="signal peptide" evidence="2">
    <location>
        <begin position="1"/>
        <end position="19"/>
    </location>
</feature>
<feature type="propeptide" id="PRO_0000462158" evidence="6">
    <location>
        <begin position="20"/>
        <end position="30"/>
    </location>
</feature>
<feature type="chain" id="PRO_0000462159" description="Sea anemone sodium channel inhibitor type I" evidence="6">
    <location>
        <begin position="33"/>
        <end position="76"/>
    </location>
</feature>
<feature type="disulfide bond" evidence="1">
    <location>
        <begin position="37"/>
        <end position="72"/>
    </location>
</feature>
<feature type="disulfide bond" evidence="1">
    <location>
        <begin position="39"/>
        <end position="60"/>
    </location>
</feature>
<feature type="disulfide bond" evidence="1">
    <location>
        <begin position="53"/>
        <end position="73"/>
    </location>
</feature>
<protein>
    <recommendedName>
        <fullName evidence="4">Sea anemone sodium channel inhibitor type I</fullName>
    </recommendedName>
    <alternativeName>
        <fullName evidence="4">NaTx type I</fullName>
    </alternativeName>
</protein>
<name>NATX_CALPY</name>
<comment type="function">
    <text evidence="5">May affect sodium channels (Nav).</text>
</comment>
<comment type="subcellular location">
    <subcellularLocation>
        <location evidence="3">Secreted</location>
    </subcellularLocation>
    <subcellularLocation>
        <location evidence="5">Nematocyst</location>
    </subcellularLocation>
</comment>
<comment type="tissue specificity">
    <text evidence="3">Expressed in acontia, a specialised envenomation structure laden with batteries of venom-containing nematocysts found only in the superfamily Metridioidea.</text>
</comment>
<comment type="similarity">
    <text evidence="5">Belongs to the sea anemone sodium channel inhibitory toxin family. Type I subfamily.</text>
</comment>
<gene>
    <name evidence="4" type="ORF">c50240_g1_i1</name>
</gene>
<organism>
    <name type="scientific">Calliactis polypus</name>
    <name type="common">Hermit crab anemone</name>
    <name type="synonym">Priapus polypus</name>
    <dbReference type="NCBI Taxonomy" id="656064"/>
    <lineage>
        <taxon>Eukaryota</taxon>
        <taxon>Metazoa</taxon>
        <taxon>Cnidaria</taxon>
        <taxon>Anthozoa</taxon>
        <taxon>Hexacorallia</taxon>
        <taxon>Actiniaria</taxon>
        <taxon>Nynantheae</taxon>
        <taxon>Hormathiidae</taxon>
        <taxon>Calliactis</taxon>
    </lineage>
</organism>
<keyword id="KW-0165">Cleavage on pair of basic residues</keyword>
<keyword id="KW-1015">Disulfide bond</keyword>
<keyword id="KW-0872">Ion channel impairing toxin</keyword>
<keyword id="KW-0166">Nematocyst</keyword>
<keyword id="KW-0528">Neurotoxin</keyword>
<keyword id="KW-0964">Secreted</keyword>
<keyword id="KW-0732">Signal</keyword>
<keyword id="KW-0800">Toxin</keyword>
<keyword id="KW-0738">Voltage-gated sodium channel impairing toxin</keyword>
<reference key="1">
    <citation type="journal article" date="2023" name="Toxins">
        <title>Acontia, a specialised defensive structure, has low venom complexity in Calliactis polypus.</title>
        <authorList>
            <person name="Smith H.L."/>
            <person name="Prentis P.J."/>
            <person name="Bryan S.E."/>
            <person name="Norton R.S."/>
            <person name="Broszczak D.A."/>
        </authorList>
    </citation>
    <scope>NUCLEOTIDE SEQUENCE [MRNA]</scope>
    <scope>IDENTIFICATION BY MASS SPECTROMETRY</scope>
    <scope>SUBCELLULAR LOCATION</scope>
    <scope>TISSUE SPECIFICITY</scope>
</reference>
<proteinExistence type="evidence at protein level"/>
<sequence length="76" mass="8197">MNRMLIIFVVVTVFGLASGLGPNMPAPDLAKRNGKGCTCNDGTTTGIFWAGSCPGGWSYCKTMWYWVVPGECCTQK</sequence>